<sequence>MARYLGPKLKLTRREGTDLFLKSGVRAIDSKCKLEAAPGQHGARKARLSEYGVQLREKQKVRRTYGVLEKQFRNYYKDAARLKGNTGENLLTLLETRLDNVVYRMGFGATRAEARQLVSHKSIMVNGRVVNIPSFKVSANDVISVREKSQKQARIKAALEVASQREKPTWVEVDAAKMEGAFKRLPERSDLSADINEQLIVELYSK</sequence>
<dbReference type="EMBL" id="CP000606">
    <property type="protein sequence ID" value="ABO22054.1"/>
    <property type="molecule type" value="Genomic_DNA"/>
</dbReference>
<dbReference type="RefSeq" id="WP_011863989.1">
    <property type="nucleotide sequence ID" value="NC_009092.1"/>
</dbReference>
<dbReference type="SMR" id="A3Q9A6"/>
<dbReference type="STRING" id="323850.Shew_0182"/>
<dbReference type="KEGG" id="slo:Shew_0182"/>
<dbReference type="eggNOG" id="COG0522">
    <property type="taxonomic scope" value="Bacteria"/>
</dbReference>
<dbReference type="HOGENOM" id="CLU_092403_0_2_6"/>
<dbReference type="OrthoDB" id="9803672at2"/>
<dbReference type="Proteomes" id="UP000001558">
    <property type="component" value="Chromosome"/>
</dbReference>
<dbReference type="GO" id="GO:0015935">
    <property type="term" value="C:small ribosomal subunit"/>
    <property type="evidence" value="ECO:0007669"/>
    <property type="project" value="InterPro"/>
</dbReference>
<dbReference type="GO" id="GO:0019843">
    <property type="term" value="F:rRNA binding"/>
    <property type="evidence" value="ECO:0007669"/>
    <property type="project" value="UniProtKB-UniRule"/>
</dbReference>
<dbReference type="GO" id="GO:0003735">
    <property type="term" value="F:structural constituent of ribosome"/>
    <property type="evidence" value="ECO:0007669"/>
    <property type="project" value="InterPro"/>
</dbReference>
<dbReference type="GO" id="GO:0042274">
    <property type="term" value="P:ribosomal small subunit biogenesis"/>
    <property type="evidence" value="ECO:0007669"/>
    <property type="project" value="TreeGrafter"/>
</dbReference>
<dbReference type="GO" id="GO:0006412">
    <property type="term" value="P:translation"/>
    <property type="evidence" value="ECO:0007669"/>
    <property type="project" value="UniProtKB-UniRule"/>
</dbReference>
<dbReference type="CDD" id="cd00165">
    <property type="entry name" value="S4"/>
    <property type="match status" value="1"/>
</dbReference>
<dbReference type="FunFam" id="1.10.1050.10:FF:000001">
    <property type="entry name" value="30S ribosomal protein S4"/>
    <property type="match status" value="1"/>
</dbReference>
<dbReference type="FunFam" id="3.10.290.10:FF:000001">
    <property type="entry name" value="30S ribosomal protein S4"/>
    <property type="match status" value="1"/>
</dbReference>
<dbReference type="Gene3D" id="1.10.1050.10">
    <property type="entry name" value="Ribosomal Protein S4 Delta 41, Chain A, domain 1"/>
    <property type="match status" value="1"/>
</dbReference>
<dbReference type="Gene3D" id="3.10.290.10">
    <property type="entry name" value="RNA-binding S4 domain"/>
    <property type="match status" value="1"/>
</dbReference>
<dbReference type="HAMAP" id="MF_01306_B">
    <property type="entry name" value="Ribosomal_uS4_B"/>
    <property type="match status" value="1"/>
</dbReference>
<dbReference type="InterPro" id="IPR022801">
    <property type="entry name" value="Ribosomal_uS4"/>
</dbReference>
<dbReference type="InterPro" id="IPR005709">
    <property type="entry name" value="Ribosomal_uS4_bac-type"/>
</dbReference>
<dbReference type="InterPro" id="IPR018079">
    <property type="entry name" value="Ribosomal_uS4_CS"/>
</dbReference>
<dbReference type="InterPro" id="IPR001912">
    <property type="entry name" value="Ribosomal_uS4_N"/>
</dbReference>
<dbReference type="InterPro" id="IPR002942">
    <property type="entry name" value="S4_RNA-bd"/>
</dbReference>
<dbReference type="InterPro" id="IPR036986">
    <property type="entry name" value="S4_RNA-bd_sf"/>
</dbReference>
<dbReference type="NCBIfam" id="NF003717">
    <property type="entry name" value="PRK05327.1"/>
    <property type="match status" value="1"/>
</dbReference>
<dbReference type="NCBIfam" id="TIGR01017">
    <property type="entry name" value="rpsD_bact"/>
    <property type="match status" value="1"/>
</dbReference>
<dbReference type="PANTHER" id="PTHR11831">
    <property type="entry name" value="30S 40S RIBOSOMAL PROTEIN"/>
    <property type="match status" value="1"/>
</dbReference>
<dbReference type="PANTHER" id="PTHR11831:SF4">
    <property type="entry name" value="SMALL RIBOSOMAL SUBUNIT PROTEIN US4M"/>
    <property type="match status" value="1"/>
</dbReference>
<dbReference type="Pfam" id="PF00163">
    <property type="entry name" value="Ribosomal_S4"/>
    <property type="match status" value="1"/>
</dbReference>
<dbReference type="Pfam" id="PF01479">
    <property type="entry name" value="S4"/>
    <property type="match status" value="1"/>
</dbReference>
<dbReference type="SMART" id="SM01390">
    <property type="entry name" value="Ribosomal_S4"/>
    <property type="match status" value="1"/>
</dbReference>
<dbReference type="SMART" id="SM00363">
    <property type="entry name" value="S4"/>
    <property type="match status" value="1"/>
</dbReference>
<dbReference type="SUPFAM" id="SSF55174">
    <property type="entry name" value="Alpha-L RNA-binding motif"/>
    <property type="match status" value="1"/>
</dbReference>
<dbReference type="PROSITE" id="PS00632">
    <property type="entry name" value="RIBOSOMAL_S4"/>
    <property type="match status" value="1"/>
</dbReference>
<dbReference type="PROSITE" id="PS50889">
    <property type="entry name" value="S4"/>
    <property type="match status" value="1"/>
</dbReference>
<proteinExistence type="inferred from homology"/>
<comment type="function">
    <text evidence="1">One of the primary rRNA binding proteins, it binds directly to 16S rRNA where it nucleates assembly of the body of the 30S subunit.</text>
</comment>
<comment type="function">
    <text evidence="1">With S5 and S12 plays an important role in translational accuracy.</text>
</comment>
<comment type="subunit">
    <text evidence="1">Part of the 30S ribosomal subunit. Contacts protein S5. The interaction surface between S4 and S5 is involved in control of translational fidelity.</text>
</comment>
<comment type="similarity">
    <text evidence="1">Belongs to the universal ribosomal protein uS4 family.</text>
</comment>
<organism>
    <name type="scientific">Shewanella loihica (strain ATCC BAA-1088 / PV-4)</name>
    <dbReference type="NCBI Taxonomy" id="323850"/>
    <lineage>
        <taxon>Bacteria</taxon>
        <taxon>Pseudomonadati</taxon>
        <taxon>Pseudomonadota</taxon>
        <taxon>Gammaproteobacteria</taxon>
        <taxon>Alteromonadales</taxon>
        <taxon>Shewanellaceae</taxon>
        <taxon>Shewanella</taxon>
    </lineage>
</organism>
<keyword id="KW-1185">Reference proteome</keyword>
<keyword id="KW-0687">Ribonucleoprotein</keyword>
<keyword id="KW-0689">Ribosomal protein</keyword>
<keyword id="KW-0694">RNA-binding</keyword>
<keyword id="KW-0699">rRNA-binding</keyword>
<evidence type="ECO:0000255" key="1">
    <source>
        <dbReference type="HAMAP-Rule" id="MF_01306"/>
    </source>
</evidence>
<evidence type="ECO:0000305" key="2"/>
<gene>
    <name evidence="1" type="primary">rpsD</name>
    <name type="ordered locus">Shew_0182</name>
</gene>
<feature type="chain" id="PRO_0000293365" description="Small ribosomal subunit protein uS4">
    <location>
        <begin position="1"/>
        <end position="206"/>
    </location>
</feature>
<feature type="domain" description="S4 RNA-binding" evidence="1">
    <location>
        <begin position="96"/>
        <end position="156"/>
    </location>
</feature>
<name>RS4_SHELP</name>
<accession>A3Q9A6</accession>
<reference key="1">
    <citation type="submission" date="2007-03" db="EMBL/GenBank/DDBJ databases">
        <title>Complete sequence of Shewanella loihica PV-4.</title>
        <authorList>
            <consortium name="US DOE Joint Genome Institute"/>
            <person name="Copeland A."/>
            <person name="Lucas S."/>
            <person name="Lapidus A."/>
            <person name="Barry K."/>
            <person name="Detter J.C."/>
            <person name="Glavina del Rio T."/>
            <person name="Hammon N."/>
            <person name="Israni S."/>
            <person name="Dalin E."/>
            <person name="Tice H."/>
            <person name="Pitluck S."/>
            <person name="Chain P."/>
            <person name="Malfatti S."/>
            <person name="Shin M."/>
            <person name="Vergez L."/>
            <person name="Schmutz J."/>
            <person name="Larimer F."/>
            <person name="Land M."/>
            <person name="Hauser L."/>
            <person name="Kyrpides N."/>
            <person name="Mikhailova N."/>
            <person name="Romine M.F."/>
            <person name="Serres G."/>
            <person name="Fredrickson J."/>
            <person name="Tiedje J."/>
            <person name="Richardson P."/>
        </authorList>
    </citation>
    <scope>NUCLEOTIDE SEQUENCE [LARGE SCALE GENOMIC DNA]</scope>
    <source>
        <strain>ATCC BAA-1088 / PV-4</strain>
    </source>
</reference>
<protein>
    <recommendedName>
        <fullName evidence="1">Small ribosomal subunit protein uS4</fullName>
    </recommendedName>
    <alternativeName>
        <fullName evidence="2">30S ribosomal protein S4</fullName>
    </alternativeName>
</protein>